<comment type="function">
    <text evidence="2 3">Electroneutral Na(+) /H(+) antiporter that extrudes Na(+) in exchange for external protons driven by the inward sodium ion chemical gradient, protecting cells from acidification that occurs from metabolism (By similarity). Exchanges intracellular H(+) ions for extracellular Na(+) in 1:1 stoichiometry (By similarity). Plays a key role in maintening intracellular pH neutral and cell volume, and thus is important for cell growth, proliferation, migration and survival. In addition, can transport lithium Li(+) and also functions as a Na(+)/Li(+) antiporter. SLC9A1 also functions in membrane anchoring and organization of scaffolding complexes that coordinate signaling inputs (By similarity).</text>
</comment>
<comment type="catalytic activity">
    <reaction evidence="2">
        <text>Na(+)(in) + H(+)(out) = Na(+)(out) + H(+)(in)</text>
        <dbReference type="Rhea" id="RHEA:29419"/>
        <dbReference type="ChEBI" id="CHEBI:15378"/>
        <dbReference type="ChEBI" id="CHEBI:29101"/>
    </reaction>
</comment>
<comment type="catalytic activity">
    <reaction evidence="2">
        <text>Li(+)(out) + H(+)(in) = Li(+)(in) + H(+)(out)</text>
        <dbReference type="Rhea" id="RHEA:72407"/>
        <dbReference type="ChEBI" id="CHEBI:15378"/>
        <dbReference type="ChEBI" id="CHEBI:49713"/>
    </reaction>
</comment>
<comment type="catalytic activity">
    <reaction evidence="2">
        <text>Li(+)(in) + Na(+)(out) = Li(+)(out) + Na(+)(in)</text>
        <dbReference type="Rhea" id="RHEA:72415"/>
        <dbReference type="ChEBI" id="CHEBI:29101"/>
        <dbReference type="ChEBI" id="CHEBI:49713"/>
    </reaction>
</comment>
<comment type="activity regulation">
    <text evidence="2">Activated at acidic pHs. Inhibited by amiloride and 5-amino-substituted derivatives. Inhibited by cariporide and eniporide. Phosphatidylinositol 4,5-bisphosphate (PI(4,5)P2) and phosphatidylinositol 3,4,5-trisphosphate (PI(3,4,5)P3) bind and differentially regulate SLC9A1 activity.</text>
</comment>
<comment type="subunit">
    <text evidence="2 3">Homodimer; dimerization is crucial for its function (By similarity). Oligomer (By similarity). Interacts with CALM in a calcium-dependent manner (By similarity). Interacts with TESC (By similarity). Interacts (via the juxtamembrane region of the cytoplasmic C-terminal domain) with CHP1; the interaction occurs at the plasma membrane in a calcium-dependent manner (By similarity). Interacts with CHP2; the interaction occurs in a calcium-dependent manner (By similarity). Interacts with EZR; regulates the cytoskeletal interactions of SLC9A1 and promotes stress fiber formation (By similarity).</text>
</comment>
<comment type="subcellular location">
    <subcellularLocation>
        <location evidence="2">Cell membrane</location>
        <topology evidence="2">Multi-pass membrane protein</topology>
    </subcellularLocation>
    <subcellularLocation>
        <location evidence="4">Basolateral cell membrane</location>
        <topology evidence="2">Multi-pass membrane protein</topology>
    </subcellularLocation>
</comment>
<comment type="PTM">
    <text evidence="3">Ubiquitinated, leading to its degradation by the proteasome. Ubiquitination is reduced by CHP1.</text>
</comment>
<comment type="PTM">
    <text evidence="2">O-glycosylated.</text>
</comment>
<comment type="PTM">
    <text evidence="3">Palmitoylated; may play a major role in SLC9A1 regulation.</text>
</comment>
<comment type="PTM">
    <text evidence="2">Phosphorylation at Thr-786 increases SLC9A1 activity. Specifically dephosphorylated at Thr-786 by PPP3CA that negatively regulates SLC9A1 activity. Phosphorylation at Ser-652 by AKT1 reduces SLC9A1 binding to CALM1.</text>
</comment>
<comment type="miscellaneous">
    <text evidence="2">Predicted models used for more than 20 years predicted 10-12 transmembrane segments. More recently, the structure of SLC9A1 has been solved and reveals that SLC9A1 possesses 13 transmembrane regions.</text>
</comment>
<comment type="similarity">
    <text evidence="7">Belongs to the monovalent cation:proton antiporter 1 (CPA1) transporter (TC 2.A.36) family.</text>
</comment>
<comment type="caution">
    <text evidence="7">The interacting region with TESC is conflicting: In human, it has been reported that SLC9A1 interacts with TESC via the juxtamembrane region of the cytoplasmic C-terminal domain, including residues 507-549. However, another publication has reported interaction with TESC via residues 637-822, the region of the cytoplasmic C-terminus more distal to the membrane.</text>
</comment>
<proteinExistence type="evidence at transcript level"/>
<dbReference type="EMBL" id="X68970">
    <property type="protein sequence ID" value="CAA48771.1"/>
    <property type="molecule type" value="mRNA"/>
</dbReference>
<dbReference type="PIR" id="S30198">
    <property type="entry name" value="S30198"/>
</dbReference>
<dbReference type="RefSeq" id="NP_001233682.1">
    <property type="nucleotide sequence ID" value="NM_001246753.1"/>
</dbReference>
<dbReference type="BMRB" id="P48761"/>
<dbReference type="SMR" id="P48761"/>
<dbReference type="GlyCosmos" id="P48761">
    <property type="glycosylation" value="1 site, No reported glycans"/>
</dbReference>
<dbReference type="PaxDb" id="10029-NP_001233682.1"/>
<dbReference type="GeneID" id="100689320"/>
<dbReference type="KEGG" id="cge:100689320"/>
<dbReference type="CTD" id="6548"/>
<dbReference type="eggNOG" id="KOG1966">
    <property type="taxonomic scope" value="Eukaryota"/>
</dbReference>
<dbReference type="OrthoDB" id="196264at2759"/>
<dbReference type="Proteomes" id="UP000694386">
    <property type="component" value="Unplaced"/>
</dbReference>
<dbReference type="Proteomes" id="UP001108280">
    <property type="component" value="Chromosome 2"/>
</dbReference>
<dbReference type="GO" id="GO:0016323">
    <property type="term" value="C:basolateral plasma membrane"/>
    <property type="evidence" value="ECO:0000250"/>
    <property type="project" value="UniProtKB"/>
</dbReference>
<dbReference type="GO" id="GO:0005737">
    <property type="term" value="C:cytoplasm"/>
    <property type="evidence" value="ECO:0000250"/>
    <property type="project" value="UniProtKB"/>
</dbReference>
<dbReference type="GO" id="GO:0005886">
    <property type="term" value="C:plasma membrane"/>
    <property type="evidence" value="ECO:0000250"/>
    <property type="project" value="UniProtKB"/>
</dbReference>
<dbReference type="GO" id="GO:0048306">
    <property type="term" value="F:calcium-dependent protein binding"/>
    <property type="evidence" value="ECO:0000250"/>
    <property type="project" value="UniProtKB"/>
</dbReference>
<dbReference type="GO" id="GO:0005516">
    <property type="term" value="F:calmodulin binding"/>
    <property type="evidence" value="ECO:0007669"/>
    <property type="project" value="UniProtKB-KW"/>
</dbReference>
<dbReference type="GO" id="GO:0015386">
    <property type="term" value="F:potassium:proton antiporter activity"/>
    <property type="evidence" value="ECO:0007669"/>
    <property type="project" value="TreeGrafter"/>
</dbReference>
<dbReference type="GO" id="GO:0015385">
    <property type="term" value="F:sodium:proton antiporter activity"/>
    <property type="evidence" value="ECO:0000250"/>
    <property type="project" value="UniProtKB"/>
</dbReference>
<dbReference type="GO" id="GO:0071468">
    <property type="term" value="P:cellular response to acidic pH"/>
    <property type="evidence" value="ECO:0000250"/>
    <property type="project" value="UniProtKB"/>
</dbReference>
<dbReference type="GO" id="GO:0051259">
    <property type="term" value="P:protein complex oligomerization"/>
    <property type="evidence" value="ECO:0000250"/>
    <property type="project" value="UniProtKB"/>
</dbReference>
<dbReference type="GO" id="GO:0051453">
    <property type="term" value="P:regulation of intracellular pH"/>
    <property type="evidence" value="ECO:0000250"/>
    <property type="project" value="UniProtKB"/>
</dbReference>
<dbReference type="GO" id="GO:0006885">
    <property type="term" value="P:regulation of pH"/>
    <property type="evidence" value="ECO:0000250"/>
    <property type="project" value="UniProtKB"/>
</dbReference>
<dbReference type="GO" id="GO:0010447">
    <property type="term" value="P:response to acidic pH"/>
    <property type="evidence" value="ECO:0000250"/>
    <property type="project" value="UniProtKB"/>
</dbReference>
<dbReference type="GO" id="GO:0036376">
    <property type="term" value="P:sodium ion export across plasma membrane"/>
    <property type="evidence" value="ECO:0000250"/>
    <property type="project" value="UniProtKB"/>
</dbReference>
<dbReference type="GO" id="GO:0098719">
    <property type="term" value="P:sodium ion import across plasma membrane"/>
    <property type="evidence" value="ECO:0007669"/>
    <property type="project" value="TreeGrafter"/>
</dbReference>
<dbReference type="Gene3D" id="6.10.140.1330">
    <property type="match status" value="1"/>
</dbReference>
<dbReference type="Gene3D" id="6.10.250.1040">
    <property type="match status" value="1"/>
</dbReference>
<dbReference type="Gene3D" id="6.10.250.2020">
    <property type="match status" value="1"/>
</dbReference>
<dbReference type="InterPro" id="IPR018422">
    <property type="entry name" value="Cation/H_exchanger_CPA1"/>
</dbReference>
<dbReference type="InterPro" id="IPR006153">
    <property type="entry name" value="Cation/H_exchanger_TM"/>
</dbReference>
<dbReference type="InterPro" id="IPR004709">
    <property type="entry name" value="NaH_exchanger"/>
</dbReference>
<dbReference type="InterPro" id="IPR001970">
    <property type="entry name" value="NHE-1-like"/>
</dbReference>
<dbReference type="InterPro" id="IPR032103">
    <property type="entry name" value="NHE_CaM-bd"/>
</dbReference>
<dbReference type="NCBIfam" id="TIGR00840">
    <property type="entry name" value="b_cpa1"/>
    <property type="match status" value="1"/>
</dbReference>
<dbReference type="PANTHER" id="PTHR10110">
    <property type="entry name" value="SODIUM/HYDROGEN EXCHANGER"/>
    <property type="match status" value="1"/>
</dbReference>
<dbReference type="PANTHER" id="PTHR10110:SF59">
    <property type="entry name" value="SODIUM_HYDROGEN EXCHANGER 1"/>
    <property type="match status" value="1"/>
</dbReference>
<dbReference type="Pfam" id="PF00999">
    <property type="entry name" value="Na_H_Exchanger"/>
    <property type="match status" value="1"/>
</dbReference>
<dbReference type="Pfam" id="PF16644">
    <property type="entry name" value="NEXCaM_BD"/>
    <property type="match status" value="1"/>
</dbReference>
<dbReference type="PRINTS" id="PR01084">
    <property type="entry name" value="NAHEXCHNGR"/>
</dbReference>
<dbReference type="PRINTS" id="PR01085">
    <property type="entry name" value="NAHEXCHNGR1"/>
</dbReference>
<reference key="1">
    <citation type="journal article" date="1993" name="Biochim. Biophys. Acta">
        <title>Nucleotide sequence of the Chinese hamster Na+/H+ exchanger NHE1.</title>
        <authorList>
            <person name="Counillon L."/>
            <person name="Pouyssegur J."/>
        </authorList>
    </citation>
    <scope>NUCLEOTIDE SEQUENCE [MRNA]</scope>
</reference>
<organism>
    <name type="scientific">Cricetulus griseus</name>
    <name type="common">Chinese hamster</name>
    <name type="synonym">Cricetulus barabensis griseus</name>
    <dbReference type="NCBI Taxonomy" id="10029"/>
    <lineage>
        <taxon>Eukaryota</taxon>
        <taxon>Metazoa</taxon>
        <taxon>Chordata</taxon>
        <taxon>Craniata</taxon>
        <taxon>Vertebrata</taxon>
        <taxon>Euteleostomi</taxon>
        <taxon>Mammalia</taxon>
        <taxon>Eutheria</taxon>
        <taxon>Euarchontoglires</taxon>
        <taxon>Glires</taxon>
        <taxon>Rodentia</taxon>
        <taxon>Myomorpha</taxon>
        <taxon>Muroidea</taxon>
        <taxon>Cricetidae</taxon>
        <taxon>Cricetinae</taxon>
        <taxon>Cricetulus</taxon>
    </lineage>
</organism>
<gene>
    <name type="primary">SLC9A1</name>
    <name type="synonym">NHE1</name>
</gene>
<protein>
    <recommendedName>
        <fullName>Sodium/hydrogen exchanger 1</fullName>
    </recommendedName>
    <alternativeName>
        <fullName>Na(+)/H(+) exchanger 1</fullName>
        <shortName>NHE-1</shortName>
    </alternativeName>
    <alternativeName>
        <fullName>Solute carrier family 9 member 1</fullName>
    </alternativeName>
</protein>
<feature type="chain" id="PRO_0000052346" description="Sodium/hydrogen exchanger 1">
    <location>
        <begin position="1"/>
        <end position="822"/>
    </location>
</feature>
<feature type="topological domain" description="Extracellular" evidence="7">
    <location>
        <begin position="1"/>
        <end position="102"/>
    </location>
</feature>
<feature type="transmembrane region" description="Helical; Name=1" evidence="2">
    <location>
        <begin position="103"/>
        <end position="125"/>
    </location>
</feature>
<feature type="topological domain" description="Cytoplasmic" evidence="7">
    <location>
        <begin position="126"/>
        <end position="134"/>
    </location>
</feature>
<feature type="transmembrane region" description="Helical; Name=2" evidence="2">
    <location>
        <begin position="135"/>
        <end position="152"/>
    </location>
</feature>
<feature type="topological domain" description="Extracellular" evidence="7">
    <location>
        <begin position="153"/>
        <end position="162"/>
    </location>
</feature>
<feature type="transmembrane region" description="Helical; Name=3" evidence="2">
    <location>
        <begin position="163"/>
        <end position="180"/>
    </location>
</feature>
<feature type="topological domain" description="Cytoplasmic" evidence="7">
    <location>
        <begin position="181"/>
        <end position="190"/>
    </location>
</feature>
<feature type="transmembrane region" description="Helical; Name=4" evidence="2">
    <location>
        <begin position="191"/>
        <end position="219"/>
    </location>
</feature>
<feature type="topological domain" description="Extracellular" evidence="7">
    <location>
        <begin position="220"/>
        <end position="226"/>
    </location>
</feature>
<feature type="transmembrane region" description="Helical; Name=5" evidence="2">
    <location>
        <begin position="227"/>
        <end position="253"/>
    </location>
</feature>
<feature type="topological domain" description="Cytoplasmic" evidence="7">
    <location>
        <begin position="254"/>
        <end position="256"/>
    </location>
</feature>
<feature type="transmembrane region" description="Helical; Name=6" evidence="2">
    <location>
        <begin position="257"/>
        <end position="287"/>
    </location>
</feature>
<feature type="topological domain" description="Extracellular" evidence="7">
    <location>
        <begin position="288"/>
        <end position="291"/>
    </location>
</feature>
<feature type="transmembrane region" description="Helical; Name=7" evidence="2">
    <location>
        <begin position="292"/>
        <end position="326"/>
    </location>
</feature>
<feature type="topological domain" description="Cytoplasmic" evidence="7">
    <location>
        <begin position="327"/>
        <end position="332"/>
    </location>
</feature>
<feature type="transmembrane region" description="Helical; Name=8" evidence="2">
    <location>
        <begin position="333"/>
        <end position="345"/>
    </location>
</feature>
<feature type="topological domain" description="Extracellular" evidence="7">
    <location>
        <begin position="346"/>
        <end position="354"/>
    </location>
</feature>
<feature type="transmembrane region" description="Helical; Name=9" evidence="2">
    <location>
        <begin position="355"/>
        <end position="375"/>
    </location>
</feature>
<feature type="topological domain" description="Cytoplasmic" evidence="7">
    <location>
        <begin position="376"/>
        <end position="377"/>
    </location>
</feature>
<feature type="transmembrane region" description="Helical; Name=10" evidence="2">
    <location>
        <begin position="378"/>
        <end position="408"/>
    </location>
</feature>
<feature type="topological domain" description="Extracellular" evidence="7">
    <location>
        <begin position="409"/>
        <end position="414"/>
    </location>
</feature>
<feature type="transmembrane region" description="Helical; Name=11" evidence="2">
    <location>
        <begin position="415"/>
        <end position="442"/>
    </location>
</feature>
<feature type="topological domain" description="Cytoplasmic" evidence="7">
    <location>
        <begin position="443"/>
        <end position="448"/>
    </location>
</feature>
<feature type="transmembrane region" description="Helical; Name=12" evidence="2">
    <location>
        <begin position="449"/>
        <end position="473"/>
    </location>
</feature>
<feature type="topological domain" description="Extracellular" evidence="7">
    <location>
        <begin position="474"/>
        <end position="479"/>
    </location>
</feature>
<feature type="transmembrane region" description="Helical; Name=13" evidence="2">
    <location>
        <begin position="480"/>
        <end position="509"/>
    </location>
</feature>
<feature type="topological domain" description="Cytoplasmic" evidence="7">
    <location>
        <begin position="510"/>
        <end position="822"/>
    </location>
</feature>
<feature type="region of interest" description="Disordered" evidence="6">
    <location>
        <begin position="41"/>
        <end position="73"/>
    </location>
</feature>
<feature type="region of interest" description="Interaction with TESC" evidence="2">
    <location>
        <begin position="507"/>
        <end position="549"/>
    </location>
</feature>
<feature type="region of interest" description="PI(4,5)P2-binding region" evidence="3">
    <location>
        <begin position="513"/>
        <end position="520"/>
    </location>
</feature>
<feature type="region of interest" description="Interaction with CHP2" evidence="2">
    <location>
        <begin position="519"/>
        <end position="549"/>
    </location>
</feature>
<feature type="region of interest" description="Confers pH-dependent PI(4,5)P2 binding" evidence="2">
    <location>
        <begin position="544"/>
        <end position="549"/>
    </location>
</feature>
<feature type="region of interest" description="PI(4,5)P2-binding region" evidence="3">
    <location>
        <begin position="556"/>
        <end position="564"/>
    </location>
</feature>
<feature type="region of interest" description="Interaction with CALM1" evidence="2">
    <location>
        <begin position="637"/>
        <end position="822"/>
    </location>
</feature>
<feature type="region of interest" description="Interaction with TESC" evidence="2">
    <location>
        <begin position="637"/>
        <end position="822"/>
    </location>
</feature>
<feature type="region of interest" description="Interaction with PPP3CA" evidence="2">
    <location>
        <begin position="688"/>
        <end position="691"/>
    </location>
</feature>
<feature type="region of interest" description="Interaction with PPP3CA" evidence="2">
    <location>
        <begin position="719"/>
        <end position="724"/>
    </location>
</feature>
<feature type="region of interest" description="Disordered" evidence="6">
    <location>
        <begin position="752"/>
        <end position="822"/>
    </location>
</feature>
<feature type="compositionally biased region" description="Acidic residues" evidence="6">
    <location>
        <begin position="759"/>
        <end position="768"/>
    </location>
</feature>
<feature type="site" description="Channel pore-lining" evidence="1">
    <location>
        <position position="165"/>
    </location>
</feature>
<feature type="modified residue" description="Phosphoserine" evidence="2">
    <location>
        <position position="603"/>
    </location>
</feature>
<feature type="modified residue" description="Phosphoserine" evidence="2">
    <location>
        <position position="606"/>
    </location>
</feature>
<feature type="modified residue" description="Phosphothreonine" evidence="5">
    <location>
        <position position="607"/>
    </location>
</feature>
<feature type="modified residue" description="Phosphoserine" evidence="2">
    <location>
        <position position="609"/>
    </location>
</feature>
<feature type="modified residue" description="Phosphoserine" evidence="2">
    <location>
        <position position="652"/>
    </location>
</feature>
<feature type="modified residue" description="Phosphoserine" evidence="2">
    <location>
        <position position="697"/>
    </location>
</feature>
<feature type="modified residue" description="Phosphoserine" evidence="2">
    <location>
        <position position="701"/>
    </location>
</feature>
<feature type="modified residue" description="Phosphoserine" evidence="2">
    <location>
        <position position="707"/>
    </location>
</feature>
<feature type="modified residue" description="Phosphoserine" evidence="2">
    <location>
        <position position="727"/>
    </location>
</feature>
<feature type="modified residue" description="Phosphoserine" evidence="2">
    <location>
        <position position="730"/>
    </location>
</feature>
<feature type="modified residue" description="Phosphoserine" evidence="2">
    <location>
        <position position="733"/>
    </location>
</feature>
<feature type="modified residue" description="Phosphothreonine" evidence="5">
    <location>
        <position position="756"/>
    </location>
</feature>
<feature type="modified residue" description="Phosphothreonine" evidence="2">
    <location>
        <position position="786"/>
    </location>
</feature>
<feature type="modified residue" description="Phosphoserine" evidence="2">
    <location>
        <position position="792"/>
    </location>
</feature>
<feature type="modified residue" description="Phosphoserine" evidence="5">
    <location>
        <position position="794"/>
    </location>
</feature>
<feature type="modified residue" description="Phosphoserine" evidence="3">
    <location>
        <position position="803"/>
    </location>
</feature>
<accession>P48761</accession>
<evidence type="ECO:0000250" key="1"/>
<evidence type="ECO:0000250" key="2">
    <source>
        <dbReference type="UniProtKB" id="P19634"/>
    </source>
</evidence>
<evidence type="ECO:0000250" key="3">
    <source>
        <dbReference type="UniProtKB" id="P26431"/>
    </source>
</evidence>
<evidence type="ECO:0000250" key="4">
    <source>
        <dbReference type="UniProtKB" id="P48762"/>
    </source>
</evidence>
<evidence type="ECO:0000250" key="5">
    <source>
        <dbReference type="UniProtKB" id="Q61165"/>
    </source>
</evidence>
<evidence type="ECO:0000256" key="6">
    <source>
        <dbReference type="SAM" id="MobiDB-lite"/>
    </source>
</evidence>
<evidence type="ECO:0000305" key="7"/>
<sequence length="822" mass="92004">MMLRWSGIWGLSPPRIFPSLLVVVALVGLLPVLRSHGLQPSPTANTIRGAEPPRERSIGDVTTAPSEPVHHPDDRNLTNLHIEHGAKTLRKAFPVLDIDYLHVRTPFEISLWILLACLMKIGFHVIPTISSIVPESCLLIVVGLLVGGLIKGVGETPPFLQSDVFFLFLLPPIILDAGYFLPLRQFTENLGTILIFAVVGTLWNAFFLGGLLYAVCLVGGEQINNIGLLDTLLFGSIISAVDPVAVVAVFEEIHINELLHILVFGESLLNDAVTVVLYHLFEEFANYDSIGISDIFLGFLSFFVVALGGVFVGVVYGVIAAFTSRFTSHIRVIEPLFVFLYSYMAYLSAELFHLSGIMALIASGVVMRPYVEANISHKSHTTIKYFLKMWSSVSETLIFIFLGVSTVAGSHQWNWTFVISTLLFCLIARVLGVLVLTWFINKFRIVKLTPKDQFIIAYGGLRGAIAFSLGYLMDKKHFPMCDLFLTAIITVIFFTVFVQGMTIRPLVDLLAVKKKQETKRSINEEIHTQFLDHLLTGIEDICGHYGHHHWKDKLNRFNKKYVKKCLIAGERSKEPQLIAFYHKMEMKQAIELVESGGMGKIPSAVSTVSMQNIHPKSMASERILPALSKDKEEEIRKILRSNLQKTRQRLRSYNRHTLVADPYEEAWNQMLLRRQKARQLEQKMSNYLTVPAHKLDSPTMSRARIGSDPLAYEPKADLPVITIDPASPQSPESVDLVNEELKAKVLGVNRDPTRLTRGEEDEDEDEDGVIMMRRKEPSSPGTDVFTPAPMYSPSSQRIQRCLSDPGPHPEPGEGEPFIPKGE</sequence>
<name>SL9A1_CRIGR</name>
<keyword id="KW-0050">Antiport</keyword>
<keyword id="KW-0112">Calmodulin-binding</keyword>
<keyword id="KW-1003">Cell membrane</keyword>
<keyword id="KW-0325">Glycoprotein</keyword>
<keyword id="KW-0406">Ion transport</keyword>
<keyword id="KW-0449">Lipoprotein</keyword>
<keyword id="KW-0472">Membrane</keyword>
<keyword id="KW-0564">Palmitate</keyword>
<keyword id="KW-0597">Phosphoprotein</keyword>
<keyword id="KW-0915">Sodium</keyword>
<keyword id="KW-0739">Sodium transport</keyword>
<keyword id="KW-0812">Transmembrane</keyword>
<keyword id="KW-1133">Transmembrane helix</keyword>
<keyword id="KW-0813">Transport</keyword>
<keyword id="KW-0832">Ubl conjugation</keyword>